<proteinExistence type="inferred from homology"/>
<protein>
    <recommendedName>
        <fullName>Pre-rRNA-processing protein esf2</fullName>
    </recommendedName>
    <alternativeName>
        <fullName>18S rRNA factor 2</fullName>
    </alternativeName>
</protein>
<dbReference type="EMBL" id="AM270089">
    <property type="protein sequence ID" value="CAK38966.1"/>
    <property type="molecule type" value="Genomic_DNA"/>
</dbReference>
<dbReference type="RefSeq" id="XP_001402237.2">
    <property type="nucleotide sequence ID" value="XM_001402200.2"/>
</dbReference>
<dbReference type="EnsemblFungi" id="CAK38966">
    <property type="protein sequence ID" value="CAK38966"/>
    <property type="gene ID" value="An04g08790"/>
</dbReference>
<dbReference type="GeneID" id="4991283"/>
<dbReference type="KEGG" id="ang:An04g08790"/>
<dbReference type="HOGENOM" id="CLU_054086_0_0_1"/>
<dbReference type="Proteomes" id="UP000006706">
    <property type="component" value="Chromosome 6L"/>
</dbReference>
<dbReference type="GO" id="GO:0005730">
    <property type="term" value="C:nucleolus"/>
    <property type="evidence" value="ECO:0007669"/>
    <property type="project" value="UniProtKB-SubCell"/>
</dbReference>
<dbReference type="GO" id="GO:0003723">
    <property type="term" value="F:RNA binding"/>
    <property type="evidence" value="ECO:0007669"/>
    <property type="project" value="UniProtKB-KW"/>
</dbReference>
<dbReference type="GO" id="GO:0000480">
    <property type="term" value="P:endonucleolytic cleavage in 5'-ETS of tricistronic rRNA transcript (SSU-rRNA, 5.8S rRNA, LSU-rRNA)"/>
    <property type="evidence" value="ECO:0007669"/>
    <property type="project" value="TreeGrafter"/>
</dbReference>
<dbReference type="GO" id="GO:0000447">
    <property type="term" value="P:endonucleolytic cleavage in ITS1 to separate SSU-rRNA from 5.8S rRNA and LSU-rRNA from tricistronic rRNA transcript (SSU-rRNA, 5.8S rRNA, LSU-rRNA)"/>
    <property type="evidence" value="ECO:0007669"/>
    <property type="project" value="TreeGrafter"/>
</dbReference>
<dbReference type="GO" id="GO:0000472">
    <property type="term" value="P:endonucleolytic cleavage to generate mature 5'-end of SSU-rRNA from (SSU-rRNA, 5.8S rRNA, LSU-rRNA)"/>
    <property type="evidence" value="ECO:0007669"/>
    <property type="project" value="TreeGrafter"/>
</dbReference>
<dbReference type="GO" id="GO:0034462">
    <property type="term" value="P:small-subunit processome assembly"/>
    <property type="evidence" value="ECO:0007669"/>
    <property type="project" value="TreeGrafter"/>
</dbReference>
<dbReference type="CDD" id="cd12263">
    <property type="entry name" value="RRM_ABT1_like"/>
    <property type="match status" value="1"/>
</dbReference>
<dbReference type="Gene3D" id="3.30.70.330">
    <property type="match status" value="1"/>
</dbReference>
<dbReference type="InterPro" id="IPR039119">
    <property type="entry name" value="ABT1/Esf2"/>
</dbReference>
<dbReference type="InterPro" id="IPR034353">
    <property type="entry name" value="ABT1/ESF2_RRM"/>
</dbReference>
<dbReference type="InterPro" id="IPR012677">
    <property type="entry name" value="Nucleotide-bd_a/b_plait_sf"/>
</dbReference>
<dbReference type="InterPro" id="IPR035979">
    <property type="entry name" value="RBD_domain_sf"/>
</dbReference>
<dbReference type="PANTHER" id="PTHR12311">
    <property type="entry name" value="ACTIVATOR OF BASAL TRANSCRIPTION 1"/>
    <property type="match status" value="1"/>
</dbReference>
<dbReference type="PANTHER" id="PTHR12311:SF7">
    <property type="entry name" value="ACTIVATOR OF BASAL TRANSCRIPTION 1"/>
    <property type="match status" value="1"/>
</dbReference>
<dbReference type="SUPFAM" id="SSF54928">
    <property type="entry name" value="RNA-binding domain, RBD"/>
    <property type="match status" value="1"/>
</dbReference>
<comment type="function">
    <text evidence="1">Involved in the small subunit (SSU) processome assembly and function, and in the 18S rRNA synthesis. Required for the early cleavages at sites A0, A1 and A2 (By similarity).</text>
</comment>
<comment type="subcellular location">
    <subcellularLocation>
        <location evidence="1">Nucleus</location>
        <location evidence="1">Nucleolus</location>
    </subcellularLocation>
</comment>
<comment type="similarity">
    <text evidence="3">Belongs to the ESF2/ABP1 family.</text>
</comment>
<accession>A2QJZ4</accession>
<feature type="chain" id="PRO_0000285364" description="Pre-rRNA-processing protein esf2">
    <location>
        <begin position="1"/>
        <end position="304"/>
    </location>
</feature>
<feature type="domain" description="RRM">
    <location>
        <begin position="105"/>
        <end position="195"/>
    </location>
</feature>
<feature type="region of interest" description="Disordered" evidence="2">
    <location>
        <begin position="1"/>
        <end position="98"/>
    </location>
</feature>
<feature type="compositionally biased region" description="Basic residues" evidence="2">
    <location>
        <begin position="41"/>
        <end position="51"/>
    </location>
</feature>
<feature type="compositionally biased region" description="Acidic residues" evidence="2">
    <location>
        <begin position="55"/>
        <end position="69"/>
    </location>
</feature>
<feature type="compositionally biased region" description="Basic and acidic residues" evidence="2">
    <location>
        <begin position="70"/>
        <end position="96"/>
    </location>
</feature>
<gene>
    <name type="primary">esf2</name>
    <name type="ORF">An04g08790</name>
</gene>
<keyword id="KW-0539">Nucleus</keyword>
<keyword id="KW-1185">Reference proteome</keyword>
<keyword id="KW-0690">Ribosome biogenesis</keyword>
<keyword id="KW-0694">RNA-binding</keyword>
<keyword id="KW-0698">rRNA processing</keyword>
<sequence>MQPVPQPQSTNDLHGLNDDSEEDESDNGVGLGDSEDERVVMKGRSKSKSKKQAGSDDEDDEEEENDYNNDEDHYLDATTEVEAKKSTSKKPLDKAKKAPKKNKTGVIYFSSLPPYLKPFALKNLLETRSFGPITRVFLSPEVRPASAPRRRSNKRKTYSDGWVEFASKKTAKICAETLNATIIGGKKGGWYHDDVWNMKYLKGFRWADLMEQVQRERSEREARKRVEDSRARKEDKVFLEGYEKGKVIEGIQKKNEEKGKKKKDSAKEVRMVFKQNEVKLGRDKSAEDPGRLGDDTKRVLGKIF</sequence>
<reference key="1">
    <citation type="journal article" date="2007" name="Nat. Biotechnol.">
        <title>Genome sequencing and analysis of the versatile cell factory Aspergillus niger CBS 513.88.</title>
        <authorList>
            <person name="Pel H.J."/>
            <person name="de Winde J.H."/>
            <person name="Archer D.B."/>
            <person name="Dyer P.S."/>
            <person name="Hofmann G."/>
            <person name="Schaap P.J."/>
            <person name="Turner G."/>
            <person name="de Vries R.P."/>
            <person name="Albang R."/>
            <person name="Albermann K."/>
            <person name="Andersen M.R."/>
            <person name="Bendtsen J.D."/>
            <person name="Benen J.A.E."/>
            <person name="van den Berg M."/>
            <person name="Breestraat S."/>
            <person name="Caddick M.X."/>
            <person name="Contreras R."/>
            <person name="Cornell M."/>
            <person name="Coutinho P.M."/>
            <person name="Danchin E.G.J."/>
            <person name="Debets A.J.M."/>
            <person name="Dekker P."/>
            <person name="van Dijck P.W.M."/>
            <person name="van Dijk A."/>
            <person name="Dijkhuizen L."/>
            <person name="Driessen A.J.M."/>
            <person name="d'Enfert C."/>
            <person name="Geysens S."/>
            <person name="Goosen C."/>
            <person name="Groot G.S.P."/>
            <person name="de Groot P.W.J."/>
            <person name="Guillemette T."/>
            <person name="Henrissat B."/>
            <person name="Herweijer M."/>
            <person name="van den Hombergh J.P.T.W."/>
            <person name="van den Hondel C.A.M.J.J."/>
            <person name="van der Heijden R.T.J.M."/>
            <person name="van der Kaaij R.M."/>
            <person name="Klis F.M."/>
            <person name="Kools H.J."/>
            <person name="Kubicek C.P."/>
            <person name="van Kuyk P.A."/>
            <person name="Lauber J."/>
            <person name="Lu X."/>
            <person name="van der Maarel M.J.E.C."/>
            <person name="Meulenberg R."/>
            <person name="Menke H."/>
            <person name="Mortimer M.A."/>
            <person name="Nielsen J."/>
            <person name="Oliver S.G."/>
            <person name="Olsthoorn M."/>
            <person name="Pal K."/>
            <person name="van Peij N.N.M.E."/>
            <person name="Ram A.F.J."/>
            <person name="Rinas U."/>
            <person name="Roubos J.A."/>
            <person name="Sagt C.M.J."/>
            <person name="Schmoll M."/>
            <person name="Sun J."/>
            <person name="Ussery D."/>
            <person name="Varga J."/>
            <person name="Vervecken W."/>
            <person name="van de Vondervoort P.J.J."/>
            <person name="Wedler H."/>
            <person name="Woesten H.A.B."/>
            <person name="Zeng A.-P."/>
            <person name="van Ooyen A.J.J."/>
            <person name="Visser J."/>
            <person name="Stam H."/>
        </authorList>
    </citation>
    <scope>NUCLEOTIDE SEQUENCE [LARGE SCALE GENOMIC DNA]</scope>
    <source>
        <strain>ATCC MYA-4892 / CBS 513.88 / FGSC A1513</strain>
    </source>
</reference>
<organism>
    <name type="scientific">Aspergillus niger (strain ATCC MYA-4892 / CBS 513.88 / FGSC A1513)</name>
    <dbReference type="NCBI Taxonomy" id="425011"/>
    <lineage>
        <taxon>Eukaryota</taxon>
        <taxon>Fungi</taxon>
        <taxon>Dikarya</taxon>
        <taxon>Ascomycota</taxon>
        <taxon>Pezizomycotina</taxon>
        <taxon>Eurotiomycetes</taxon>
        <taxon>Eurotiomycetidae</taxon>
        <taxon>Eurotiales</taxon>
        <taxon>Aspergillaceae</taxon>
        <taxon>Aspergillus</taxon>
        <taxon>Aspergillus subgen. Circumdati</taxon>
    </lineage>
</organism>
<evidence type="ECO:0000250" key="1"/>
<evidence type="ECO:0000256" key="2">
    <source>
        <dbReference type="SAM" id="MobiDB-lite"/>
    </source>
</evidence>
<evidence type="ECO:0000305" key="3"/>
<name>ESF2_ASPNC</name>